<evidence type="ECO:0000250" key="1"/>
<evidence type="ECO:0000255" key="2"/>
<evidence type="ECO:0000305" key="3"/>
<dbReference type="EMBL" id="BA000028">
    <property type="protein sequence ID" value="BAC13048.1"/>
    <property type="status" value="ALT_INIT"/>
    <property type="molecule type" value="Genomic_DNA"/>
</dbReference>
<dbReference type="RefSeq" id="WP_011065493.1">
    <property type="nucleotide sequence ID" value="NC_004193.1"/>
</dbReference>
<dbReference type="SMR" id="Q8CUL5"/>
<dbReference type="STRING" id="221109.gene:10733331"/>
<dbReference type="KEGG" id="oih:OB1092"/>
<dbReference type="eggNOG" id="COG0534">
    <property type="taxonomic scope" value="Bacteria"/>
</dbReference>
<dbReference type="HOGENOM" id="CLU_012893_6_0_9"/>
<dbReference type="OrthoDB" id="9780160at2"/>
<dbReference type="PhylomeDB" id="Q8CUL5"/>
<dbReference type="Proteomes" id="UP000000822">
    <property type="component" value="Chromosome"/>
</dbReference>
<dbReference type="GO" id="GO:0005886">
    <property type="term" value="C:plasma membrane"/>
    <property type="evidence" value="ECO:0007669"/>
    <property type="project" value="UniProtKB-SubCell"/>
</dbReference>
<dbReference type="GO" id="GO:0015297">
    <property type="term" value="F:antiporter activity"/>
    <property type="evidence" value="ECO:0007669"/>
    <property type="project" value="UniProtKB-KW"/>
</dbReference>
<dbReference type="GO" id="GO:0042910">
    <property type="term" value="F:xenobiotic transmembrane transporter activity"/>
    <property type="evidence" value="ECO:0007669"/>
    <property type="project" value="InterPro"/>
</dbReference>
<dbReference type="GO" id="GO:0006811">
    <property type="term" value="P:monoatomic ion transport"/>
    <property type="evidence" value="ECO:0007669"/>
    <property type="project" value="UniProtKB-KW"/>
</dbReference>
<dbReference type="CDD" id="cd13131">
    <property type="entry name" value="MATE_NorM_like"/>
    <property type="match status" value="1"/>
</dbReference>
<dbReference type="InterPro" id="IPR002528">
    <property type="entry name" value="MATE_fam"/>
</dbReference>
<dbReference type="InterPro" id="IPR050222">
    <property type="entry name" value="MATE_MdtK"/>
</dbReference>
<dbReference type="InterPro" id="IPR048279">
    <property type="entry name" value="MdtK-like"/>
</dbReference>
<dbReference type="NCBIfam" id="TIGR00797">
    <property type="entry name" value="matE"/>
    <property type="match status" value="1"/>
</dbReference>
<dbReference type="PANTHER" id="PTHR43298:SF2">
    <property type="entry name" value="FMN_FAD EXPORTER YEEO-RELATED"/>
    <property type="match status" value="1"/>
</dbReference>
<dbReference type="PANTHER" id="PTHR43298">
    <property type="entry name" value="MULTIDRUG RESISTANCE PROTEIN NORM-RELATED"/>
    <property type="match status" value="1"/>
</dbReference>
<dbReference type="Pfam" id="PF01554">
    <property type="entry name" value="MatE"/>
    <property type="match status" value="2"/>
</dbReference>
<dbReference type="PIRSF" id="PIRSF006603">
    <property type="entry name" value="DinF"/>
    <property type="match status" value="1"/>
</dbReference>
<gene>
    <name type="primary">norM</name>
    <name type="ordered locus">OB1092</name>
</gene>
<accession>Q8CUL5</accession>
<organism>
    <name type="scientific">Oceanobacillus iheyensis (strain DSM 14371 / CIP 107618 / JCM 11309 / KCTC 3954 / HTE831)</name>
    <dbReference type="NCBI Taxonomy" id="221109"/>
    <lineage>
        <taxon>Bacteria</taxon>
        <taxon>Bacillati</taxon>
        <taxon>Bacillota</taxon>
        <taxon>Bacilli</taxon>
        <taxon>Bacillales</taxon>
        <taxon>Bacillaceae</taxon>
        <taxon>Oceanobacillus</taxon>
    </lineage>
</organism>
<keyword id="KW-0050">Antiport</keyword>
<keyword id="KW-1003">Cell membrane</keyword>
<keyword id="KW-0406">Ion transport</keyword>
<keyword id="KW-0472">Membrane</keyword>
<keyword id="KW-1185">Reference proteome</keyword>
<keyword id="KW-0812">Transmembrane</keyword>
<keyword id="KW-1133">Transmembrane helix</keyword>
<keyword id="KW-0813">Transport</keyword>
<comment type="function">
    <text evidence="1">Multidrug efflux pump.</text>
</comment>
<comment type="subcellular location">
    <subcellularLocation>
        <location evidence="1">Cell membrane</location>
        <topology evidence="1">Multi-pass membrane protein</topology>
    </subcellularLocation>
</comment>
<comment type="similarity">
    <text evidence="3">Belongs to the multi antimicrobial extrusion (MATE) (TC 2.A.66.1) family.</text>
</comment>
<comment type="sequence caution" evidence="3">
    <conflict type="erroneous initiation">
        <sequence resource="EMBL-CDS" id="BAC13048"/>
    </conflict>
</comment>
<sequence length="447" mass="49049">MYQTTTLKDKIKLFIIILLPILITQVSINLMSFFDTMMSGQFSARDLAGVAIGSSLWVPILTGINGIVLSITPIIAHLIGAKNKKDIPQVIQQGIYLSFVLSIIIIVIGGIALDPILQAMSLEKEVQRIAKYYLITLGTGIVPLFLFHTIRSFMDGLGQTRSSMIIILISLPINAVLNYILIFGKFGIPAFGGIGAGIATSLTYWIISGISIFMIHRVYPFHSYKVFQKILPPTLSYWADQLKIGLPIGLAIFFETSIFSAVTLLMSEYNTNTIAAHQAAMNFASLLYMLPLSVGMALTIAVGFEVGAKRLHDAKRYTYLGIMGGLFIAIFAGIILYTFDDVVARLYNSNPEVIELTKQFIIFAIFYQLADAIGAPIQGALRGYKDVNMTLVIALISYWIIGLPTGYLLANYTALEPFGYWVGIIVGLSTGAIALLARLLFIQKKSV</sequence>
<name>NORM_OCEIH</name>
<protein>
    <recommendedName>
        <fullName>Probable multidrug resistance protein NorM</fullName>
    </recommendedName>
    <alternativeName>
        <fullName>Multidrug-efflux transporter</fullName>
    </alternativeName>
</protein>
<proteinExistence type="inferred from homology"/>
<feature type="chain" id="PRO_0000164227" description="Probable multidrug resistance protein NorM">
    <location>
        <begin position="1"/>
        <end position="447"/>
    </location>
</feature>
<feature type="transmembrane region" description="Helical" evidence="2">
    <location>
        <begin position="11"/>
        <end position="33"/>
    </location>
</feature>
<feature type="transmembrane region" description="Helical" evidence="2">
    <location>
        <begin position="53"/>
        <end position="75"/>
    </location>
</feature>
<feature type="transmembrane region" description="Helical" evidence="2">
    <location>
        <begin position="95"/>
        <end position="117"/>
    </location>
</feature>
<feature type="transmembrane region" description="Helical" evidence="2">
    <location>
        <begin position="132"/>
        <end position="154"/>
    </location>
</feature>
<feature type="transmembrane region" description="Helical" evidence="2">
    <location>
        <begin position="161"/>
        <end position="183"/>
    </location>
</feature>
<feature type="transmembrane region" description="Helical" evidence="2">
    <location>
        <begin position="193"/>
        <end position="215"/>
    </location>
</feature>
<feature type="transmembrane region" description="Helical" evidence="2">
    <location>
        <begin position="244"/>
        <end position="266"/>
    </location>
</feature>
<feature type="transmembrane region" description="Helical" evidence="2">
    <location>
        <begin position="286"/>
        <end position="308"/>
    </location>
</feature>
<feature type="transmembrane region" description="Helical" evidence="2">
    <location>
        <begin position="317"/>
        <end position="339"/>
    </location>
</feature>
<feature type="transmembrane region" description="Helical" evidence="2">
    <location>
        <begin position="359"/>
        <end position="381"/>
    </location>
</feature>
<feature type="transmembrane region" description="Helical" evidence="2">
    <location>
        <begin position="388"/>
        <end position="410"/>
    </location>
</feature>
<feature type="transmembrane region" description="Helical" evidence="2">
    <location>
        <begin position="420"/>
        <end position="442"/>
    </location>
</feature>
<reference key="1">
    <citation type="journal article" date="2002" name="Nucleic Acids Res.">
        <title>Genome sequence of Oceanobacillus iheyensis isolated from the Iheya Ridge and its unexpected adaptive capabilities to extreme environments.</title>
        <authorList>
            <person name="Takami H."/>
            <person name="Takaki Y."/>
            <person name="Uchiyama I."/>
        </authorList>
    </citation>
    <scope>NUCLEOTIDE SEQUENCE [LARGE SCALE GENOMIC DNA]</scope>
    <source>
        <strain>DSM 14371 / CIP 107618 / JCM 11309 / KCTC 3954 / HTE831</strain>
    </source>
</reference>